<reference key="1">
    <citation type="journal article" date="1999" name="Mol. Phylogenet. Evol.">
        <title>The phylogenetic position of 'Acomyinae' (Rodentia, Mammalia) as sister group of a Murinae + Gerbillinae clade: evidence from the nuclear ribonuclease gene.</title>
        <authorList>
            <person name="Dubois J.-Y.F."/>
            <person name="Catzeflis F.M."/>
            <person name="Beintema J.J."/>
        </authorList>
    </citation>
    <scope>NUCLEOTIDE SEQUENCE [GENOMIC DNA]</scope>
</reference>
<accession>Q9QYX3</accession>
<keyword id="KW-1015">Disulfide bond</keyword>
<keyword id="KW-0255">Endonuclease</keyword>
<keyword id="KW-0325">Glycoprotein</keyword>
<keyword id="KW-0378">Hydrolase</keyword>
<keyword id="KW-0456">Lyase</keyword>
<keyword id="KW-0540">Nuclease</keyword>
<keyword id="KW-0964">Secreted</keyword>
<keyword id="KW-0732">Signal</keyword>
<gene>
    <name type="primary">Rnase1</name>
</gene>
<dbReference type="EC" id="4.6.1.18"/>
<dbReference type="EMBL" id="AJ238699">
    <property type="protein sequence ID" value="CAB60000.1"/>
    <property type="molecule type" value="Genomic_DNA"/>
</dbReference>
<dbReference type="SMR" id="Q9QYX3"/>
<dbReference type="GlyCosmos" id="Q9QYX3">
    <property type="glycosylation" value="1 site, No reported glycans"/>
</dbReference>
<dbReference type="GO" id="GO:0005576">
    <property type="term" value="C:extracellular region"/>
    <property type="evidence" value="ECO:0007669"/>
    <property type="project" value="UniProtKB-SubCell"/>
</dbReference>
<dbReference type="GO" id="GO:0016829">
    <property type="term" value="F:lyase activity"/>
    <property type="evidence" value="ECO:0007669"/>
    <property type="project" value="UniProtKB-KW"/>
</dbReference>
<dbReference type="GO" id="GO:0003676">
    <property type="term" value="F:nucleic acid binding"/>
    <property type="evidence" value="ECO:0007669"/>
    <property type="project" value="InterPro"/>
</dbReference>
<dbReference type="GO" id="GO:0004522">
    <property type="term" value="F:ribonuclease A activity"/>
    <property type="evidence" value="ECO:0007669"/>
    <property type="project" value="UniProtKB-EC"/>
</dbReference>
<dbReference type="GO" id="GO:0050830">
    <property type="term" value="P:defense response to Gram-positive bacterium"/>
    <property type="evidence" value="ECO:0007669"/>
    <property type="project" value="TreeGrafter"/>
</dbReference>
<dbReference type="CDD" id="cd06265">
    <property type="entry name" value="RNase_A_canonical"/>
    <property type="match status" value="1"/>
</dbReference>
<dbReference type="FunFam" id="3.10.130.10:FF:000001">
    <property type="entry name" value="Ribonuclease pancreatic"/>
    <property type="match status" value="1"/>
</dbReference>
<dbReference type="Gene3D" id="3.10.130.10">
    <property type="entry name" value="Ribonuclease A-like domain"/>
    <property type="match status" value="1"/>
</dbReference>
<dbReference type="InterPro" id="IPR001427">
    <property type="entry name" value="RNaseA"/>
</dbReference>
<dbReference type="InterPro" id="IPR036816">
    <property type="entry name" value="RNaseA-like_dom_sf"/>
</dbReference>
<dbReference type="InterPro" id="IPR023411">
    <property type="entry name" value="RNaseA_AS"/>
</dbReference>
<dbReference type="InterPro" id="IPR023412">
    <property type="entry name" value="RNaseA_domain"/>
</dbReference>
<dbReference type="PANTHER" id="PTHR11437">
    <property type="entry name" value="RIBONUCLEASE"/>
    <property type="match status" value="1"/>
</dbReference>
<dbReference type="PANTHER" id="PTHR11437:SF24">
    <property type="entry name" value="RIBONUCLEASE PANCREATIC"/>
    <property type="match status" value="1"/>
</dbReference>
<dbReference type="Pfam" id="PF00074">
    <property type="entry name" value="RnaseA"/>
    <property type="match status" value="1"/>
</dbReference>
<dbReference type="PRINTS" id="PR00794">
    <property type="entry name" value="RIBONUCLEASE"/>
</dbReference>
<dbReference type="SMART" id="SM00092">
    <property type="entry name" value="RNAse_Pc"/>
    <property type="match status" value="1"/>
</dbReference>
<dbReference type="SUPFAM" id="SSF54076">
    <property type="entry name" value="RNase A-like"/>
    <property type="match status" value="1"/>
</dbReference>
<dbReference type="PROSITE" id="PS00127">
    <property type="entry name" value="RNASE_PANCREATIC"/>
    <property type="match status" value="1"/>
</dbReference>
<feature type="signal peptide" evidence="2">
    <location>
        <begin position="1"/>
        <end position="25"/>
    </location>
</feature>
<feature type="chain" id="PRO_0000030930" description="Ribonuclease pancreatic">
    <location>
        <begin position="26"/>
        <end position="149"/>
    </location>
</feature>
<feature type="region of interest" description="Disordered" evidence="3">
    <location>
        <begin position="30"/>
        <end position="49"/>
    </location>
</feature>
<feature type="compositionally biased region" description="Polar residues" evidence="3">
    <location>
        <begin position="39"/>
        <end position="49"/>
    </location>
</feature>
<feature type="active site" description="Proton acceptor" evidence="1">
    <location>
        <position position="37"/>
    </location>
</feature>
<feature type="active site" description="Proton donor" evidence="1">
    <location>
        <position position="144"/>
    </location>
</feature>
<feature type="binding site" evidence="1">
    <location>
        <position position="32"/>
    </location>
    <ligand>
        <name>substrate</name>
    </ligand>
</feature>
<feature type="binding site" evidence="1">
    <location>
        <position position="35"/>
    </location>
    <ligand>
        <name>substrate</name>
    </ligand>
</feature>
<feature type="binding site" evidence="1">
    <location>
        <begin position="66"/>
        <end position="70"/>
    </location>
    <ligand>
        <name>substrate</name>
    </ligand>
</feature>
<feature type="binding site" evidence="1">
    <location>
        <position position="91"/>
    </location>
    <ligand>
        <name>substrate</name>
    </ligand>
</feature>
<feature type="glycosylation site" description="N-linked (GlcNAc...) asparagine" evidence="2">
    <location>
        <position position="87"/>
    </location>
</feature>
<feature type="disulfide bond" evidence="1">
    <location>
        <begin position="51"/>
        <end position="109"/>
    </location>
</feature>
<feature type="disulfide bond" evidence="1">
    <location>
        <begin position="65"/>
        <end position="120"/>
    </location>
</feature>
<feature type="disulfide bond" evidence="1">
    <location>
        <begin position="83"/>
        <end position="135"/>
    </location>
</feature>
<feature type="disulfide bond" evidence="1">
    <location>
        <begin position="90"/>
        <end position="97"/>
    </location>
</feature>
<evidence type="ECO:0000250" key="1"/>
<evidence type="ECO:0000255" key="2"/>
<evidence type="ECO:0000256" key="3">
    <source>
        <dbReference type="SAM" id="MobiDB-lite"/>
    </source>
</evidence>
<evidence type="ECO:0000305" key="4"/>
<proteinExistence type="evidence at transcript level"/>
<protein>
    <recommendedName>
        <fullName>Ribonuclease pancreatic</fullName>
        <ecNumber>4.6.1.18</ecNumber>
    </recommendedName>
    <alternativeName>
        <fullName>RNase 1</fullName>
    </alternativeName>
    <alternativeName>
        <fullName>RNase A</fullName>
    </alternativeName>
</protein>
<organism>
    <name type="scientific">Mus pahari</name>
    <name type="common">Gairdner's shrew-mouse</name>
    <name type="synonym">Coelomys pahari</name>
    <dbReference type="NCBI Taxonomy" id="10093"/>
    <lineage>
        <taxon>Eukaryota</taxon>
        <taxon>Metazoa</taxon>
        <taxon>Chordata</taxon>
        <taxon>Craniata</taxon>
        <taxon>Vertebrata</taxon>
        <taxon>Euteleostomi</taxon>
        <taxon>Mammalia</taxon>
        <taxon>Eutheria</taxon>
        <taxon>Euarchontoglires</taxon>
        <taxon>Glires</taxon>
        <taxon>Rodentia</taxon>
        <taxon>Myomorpha</taxon>
        <taxon>Muroidea</taxon>
        <taxon>Muridae</taxon>
        <taxon>Murinae</taxon>
        <taxon>Mus</taxon>
        <taxon>Coelomys</taxon>
    </lineage>
</organism>
<sequence>MGLEKSLILFPLFVLLLGWVQPSLGKESSAQKFERQHMDSSGSSNNSPTYCNQMMKSRSMTKESCKPVNTFVHEPLEDVQAICSQENVTCKNGNRNCYKSSSALHITDCHLKGNSKYPNCNYNTNQYQKHIIVACDGNPYVPVHLDATV</sequence>
<comment type="function">
    <text evidence="1">Endonuclease that catalyzes the cleavage of RNA on the 3' side of pyrimidine nucleotides. Acts on single-stranded and double-stranded RNA (By similarity).</text>
</comment>
<comment type="catalytic activity">
    <reaction>
        <text>an [RNA] containing cytidine + H2O = an [RNA]-3'-cytidine-3'-phosphate + a 5'-hydroxy-ribonucleotide-3'-[RNA].</text>
        <dbReference type="EC" id="4.6.1.18"/>
    </reaction>
</comment>
<comment type="catalytic activity">
    <reaction>
        <text>an [RNA] containing uridine + H2O = an [RNA]-3'-uridine-3'-phosphate + a 5'-hydroxy-ribonucleotide-3'-[RNA].</text>
        <dbReference type="EC" id="4.6.1.18"/>
    </reaction>
</comment>
<comment type="subunit">
    <text evidence="1">Monomer. Interacts with and forms tight 1:1 complexes with RNH1. Dimerization of two such complexes may occur. Interaction with RNH1 inhibits this protein (By similarity).</text>
</comment>
<comment type="subcellular location">
    <subcellularLocation>
        <location>Secreted</location>
    </subcellularLocation>
</comment>
<comment type="tissue specificity">
    <text>Pancreas.</text>
</comment>
<comment type="similarity">
    <text evidence="4">Belongs to the pancreatic ribonuclease family.</text>
</comment>
<name>RNAS1_MUSPA</name>